<accession>A5ULA6</accession>
<sequence>MEIRWLGHSAFEIITDEGLNILIDPFISNNPACQIPVEEFNPDIILVTHGHSDHLGDAMELSNKNNVPVAAIHEISLFLSKQGINNIGVNIGGSFIYRGVKFTMLDAKHSSVLDIVEEPLPAGDAASFLITLEDGTKLFHAGDTGLFGDMKTIIGEIYKPDIALLPIGDKFTMGPFEAALATRWIDSKVAIPMHYNTFPPIEQDPSIYANFVSQLNPNIDVVILNPGEYFEYNPENYQD</sequence>
<feature type="chain" id="PRO_0000367230" description="UPF0173 metal-dependent hydrolase Msm_0779">
    <location>
        <begin position="1"/>
        <end position="239"/>
    </location>
</feature>
<dbReference type="EMBL" id="CP000678">
    <property type="protein sequence ID" value="ABQ86984.1"/>
    <property type="molecule type" value="Genomic_DNA"/>
</dbReference>
<dbReference type="RefSeq" id="WP_004033157.1">
    <property type="nucleotide sequence ID" value="NZ_CP117965.1"/>
</dbReference>
<dbReference type="SMR" id="A5ULA6"/>
<dbReference type="STRING" id="420247.Msm_0779"/>
<dbReference type="EnsemblBacteria" id="ABQ86984">
    <property type="protein sequence ID" value="ABQ86984"/>
    <property type="gene ID" value="Msm_0779"/>
</dbReference>
<dbReference type="KEGG" id="msi:Msm_0779"/>
<dbReference type="PATRIC" id="fig|420247.28.peg.776"/>
<dbReference type="eggNOG" id="arCOG00497">
    <property type="taxonomic scope" value="Archaea"/>
</dbReference>
<dbReference type="HOGENOM" id="CLU_070010_4_0_2"/>
<dbReference type="BioCyc" id="MSMI420247:GHWZ-793-MONOMER"/>
<dbReference type="Proteomes" id="UP000001992">
    <property type="component" value="Chromosome"/>
</dbReference>
<dbReference type="GO" id="GO:0016787">
    <property type="term" value="F:hydrolase activity"/>
    <property type="evidence" value="ECO:0007669"/>
    <property type="project" value="UniProtKB-UniRule"/>
</dbReference>
<dbReference type="Gene3D" id="3.60.15.10">
    <property type="entry name" value="Ribonuclease Z/Hydroxyacylglutathione hydrolase-like"/>
    <property type="match status" value="1"/>
</dbReference>
<dbReference type="HAMAP" id="MF_00457">
    <property type="entry name" value="UPF0173"/>
    <property type="match status" value="1"/>
</dbReference>
<dbReference type="InterPro" id="IPR001279">
    <property type="entry name" value="Metallo-B-lactamas"/>
</dbReference>
<dbReference type="InterPro" id="IPR036866">
    <property type="entry name" value="RibonucZ/Hydroxyglut_hydro"/>
</dbReference>
<dbReference type="InterPro" id="IPR022877">
    <property type="entry name" value="UPF0173"/>
</dbReference>
<dbReference type="InterPro" id="IPR050114">
    <property type="entry name" value="UPF0173_UPF0282_UlaG_hydrolase"/>
</dbReference>
<dbReference type="NCBIfam" id="NF001911">
    <property type="entry name" value="PRK00685.1"/>
    <property type="match status" value="1"/>
</dbReference>
<dbReference type="PANTHER" id="PTHR43546:SF3">
    <property type="entry name" value="UPF0173 METAL-DEPENDENT HYDROLASE MJ1163"/>
    <property type="match status" value="1"/>
</dbReference>
<dbReference type="PANTHER" id="PTHR43546">
    <property type="entry name" value="UPF0173 METAL-DEPENDENT HYDROLASE MJ1163-RELATED"/>
    <property type="match status" value="1"/>
</dbReference>
<dbReference type="Pfam" id="PF13483">
    <property type="entry name" value="Lactamase_B_3"/>
    <property type="match status" value="1"/>
</dbReference>
<dbReference type="SMART" id="SM00849">
    <property type="entry name" value="Lactamase_B"/>
    <property type="match status" value="1"/>
</dbReference>
<dbReference type="SUPFAM" id="SSF56281">
    <property type="entry name" value="Metallo-hydrolase/oxidoreductase"/>
    <property type="match status" value="1"/>
</dbReference>
<comment type="similarity">
    <text evidence="1">Belongs to the UPF0173 family.</text>
</comment>
<reference key="1">
    <citation type="journal article" date="2007" name="Proc. Natl. Acad. Sci. U.S.A.">
        <title>Genomic and metabolic adaptations of Methanobrevibacter smithii to the human gut.</title>
        <authorList>
            <person name="Samuel B.S."/>
            <person name="Hansen E.E."/>
            <person name="Manchester J.K."/>
            <person name="Coutinho P.M."/>
            <person name="Henrissat B."/>
            <person name="Fulton R."/>
            <person name="Latreille P."/>
            <person name="Kim K."/>
            <person name="Wilson R.K."/>
            <person name="Gordon J.I."/>
        </authorList>
    </citation>
    <scope>NUCLEOTIDE SEQUENCE [LARGE SCALE GENOMIC DNA]</scope>
    <source>
        <strain>ATCC 35061 / DSM 861 / OCM 144 / PS</strain>
    </source>
</reference>
<evidence type="ECO:0000255" key="1">
    <source>
        <dbReference type="HAMAP-Rule" id="MF_00457"/>
    </source>
</evidence>
<name>Y779_METS3</name>
<gene>
    <name type="ordered locus">Msm_0779</name>
</gene>
<proteinExistence type="inferred from homology"/>
<organism>
    <name type="scientific">Methanobrevibacter smithii (strain ATCC 35061 / DSM 861 / OCM 144 / PS)</name>
    <dbReference type="NCBI Taxonomy" id="420247"/>
    <lineage>
        <taxon>Archaea</taxon>
        <taxon>Methanobacteriati</taxon>
        <taxon>Methanobacteriota</taxon>
        <taxon>Methanomada group</taxon>
        <taxon>Methanobacteria</taxon>
        <taxon>Methanobacteriales</taxon>
        <taxon>Methanobacteriaceae</taxon>
        <taxon>Methanobrevibacter</taxon>
    </lineage>
</organism>
<protein>
    <recommendedName>
        <fullName evidence="1">UPF0173 metal-dependent hydrolase Msm_0779</fullName>
    </recommendedName>
</protein>
<keyword id="KW-0378">Hydrolase</keyword>